<organism>
    <name type="scientific">Aspergillus terreus (strain NIH 2624 / FGSC A1156)</name>
    <dbReference type="NCBI Taxonomy" id="341663"/>
    <lineage>
        <taxon>Eukaryota</taxon>
        <taxon>Fungi</taxon>
        <taxon>Dikarya</taxon>
        <taxon>Ascomycota</taxon>
        <taxon>Pezizomycotina</taxon>
        <taxon>Eurotiomycetes</taxon>
        <taxon>Eurotiomycetidae</taxon>
        <taxon>Eurotiales</taxon>
        <taxon>Aspergillaceae</taxon>
        <taxon>Aspergillus</taxon>
        <taxon>Aspergillus subgen. Circumdati</taxon>
    </lineage>
</organism>
<evidence type="ECO:0000255" key="1">
    <source>
        <dbReference type="HAMAP-Rule" id="MF_03039"/>
    </source>
</evidence>
<evidence type="ECO:0000256" key="2">
    <source>
        <dbReference type="SAM" id="MobiDB-lite"/>
    </source>
</evidence>
<sequence length="311" mass="32781">MPLDGVKNIVLVLSGKGGVGKSSVTLQLALALTLQGKSVGILDIDLTGPSIPRLVGLEDAKITQSPAGWVPVPVHSATDNATGPATGSLRCISLGFLLRDRGDAVIWRGPKKTAMIRQFLSDVSWGETDYLLVDTPPGTSDEHIALAEQLLTTATTDAAAAAAGGRPRLAGAVLVTTPQAIATSDVRKEVNFCVKTRIPTLGVIENMSGYACPCCGEVSNIFSSGGGRAMAQEMGIKFLGVVPVDVKFGELVEGGKIQDGSDSEDEGETARQEPEPEAVDDRPLVERYKDCWSYPRFEEFARTLIADIDGA</sequence>
<proteinExistence type="inferred from homology"/>
<comment type="function">
    <text evidence="1">Component of the cytosolic iron-sulfur (Fe/S) protein assembly (CIA) machinery. Required for maturation of extramitochondrial Fe-S proteins. The nbp35-cfd1 heterotetramer forms a Fe-S scaffold complex, mediating the de novo assembly of an Fe-S cluster and its transfer to target apoproteins.</text>
</comment>
<comment type="cofactor">
    <cofactor evidence="1">
        <name>[4Fe-4S] cluster</name>
        <dbReference type="ChEBI" id="CHEBI:49883"/>
    </cofactor>
    <text evidence="1">Binds 4 [4Fe-4S] clusters per heterotetramer. Contains two stable clusters in the N-termini of nbp35 and two labile, bridging clusters between subunits of the nbp35-cfd1 heterotetramer.</text>
</comment>
<comment type="subunit">
    <text evidence="1">Heterotetramer of 2 nbp35 and 2 cfd1 chains.</text>
</comment>
<comment type="subcellular location">
    <subcellularLocation>
        <location evidence="1">Cytoplasm</location>
    </subcellularLocation>
</comment>
<comment type="similarity">
    <text evidence="1">Belongs to the Mrp/NBP35 ATP-binding proteins family. NUBP2/CFD1 subfamily.</text>
</comment>
<reference key="1">
    <citation type="submission" date="2005-09" db="EMBL/GenBank/DDBJ databases">
        <title>Annotation of the Aspergillus terreus NIH2624 genome.</title>
        <authorList>
            <person name="Birren B.W."/>
            <person name="Lander E.S."/>
            <person name="Galagan J.E."/>
            <person name="Nusbaum C."/>
            <person name="Devon K."/>
            <person name="Henn M."/>
            <person name="Ma L.-J."/>
            <person name="Jaffe D.B."/>
            <person name="Butler J."/>
            <person name="Alvarez P."/>
            <person name="Gnerre S."/>
            <person name="Grabherr M."/>
            <person name="Kleber M."/>
            <person name="Mauceli E.W."/>
            <person name="Brockman W."/>
            <person name="Rounsley S."/>
            <person name="Young S.K."/>
            <person name="LaButti K."/>
            <person name="Pushparaj V."/>
            <person name="DeCaprio D."/>
            <person name="Crawford M."/>
            <person name="Koehrsen M."/>
            <person name="Engels R."/>
            <person name="Montgomery P."/>
            <person name="Pearson M."/>
            <person name="Howarth C."/>
            <person name="Larson L."/>
            <person name="Luoma S."/>
            <person name="White J."/>
            <person name="Alvarado L."/>
            <person name="Kodira C.D."/>
            <person name="Zeng Q."/>
            <person name="Oleary S."/>
            <person name="Yandava C."/>
            <person name="Denning D.W."/>
            <person name="Nierman W.C."/>
            <person name="Milne T."/>
            <person name="Madden K."/>
        </authorList>
    </citation>
    <scope>NUCLEOTIDE SEQUENCE [LARGE SCALE GENOMIC DNA]</scope>
    <source>
        <strain>NIH 2624 / FGSC A1156</strain>
    </source>
</reference>
<gene>
    <name type="primary">cfd1</name>
    <name type="ORF">ATEG_08054</name>
</gene>
<protein>
    <recommendedName>
        <fullName evidence="1">Cytosolic Fe-S cluster assembly factor cfd1</fullName>
    </recommendedName>
    <alternativeName>
        <fullName evidence="1">Cytosolic Fe-S cluster-deficient protein 1</fullName>
    </alternativeName>
</protein>
<name>CFD1_ASPTN</name>
<feature type="chain" id="PRO_0000278872" description="Cytosolic Fe-S cluster assembly factor cfd1">
    <location>
        <begin position="1"/>
        <end position="311"/>
    </location>
</feature>
<feature type="region of interest" description="Disordered" evidence="2">
    <location>
        <begin position="255"/>
        <end position="281"/>
    </location>
</feature>
<feature type="compositionally biased region" description="Basic and acidic residues" evidence="2">
    <location>
        <begin position="268"/>
        <end position="281"/>
    </location>
</feature>
<feature type="binding site" evidence="1">
    <location>
        <begin position="15"/>
        <end position="22"/>
    </location>
    <ligand>
        <name>ATP</name>
        <dbReference type="ChEBI" id="CHEBI:30616"/>
    </ligand>
</feature>
<feature type="binding site" evidence="1">
    <location>
        <position position="212"/>
    </location>
    <ligand>
        <name>[4Fe-4S] cluster</name>
        <dbReference type="ChEBI" id="CHEBI:49883"/>
        <note>ligand shared between dimeric partners</note>
    </ligand>
</feature>
<feature type="binding site" evidence="1">
    <location>
        <position position="215"/>
    </location>
    <ligand>
        <name>[4Fe-4S] cluster</name>
        <dbReference type="ChEBI" id="CHEBI:49883"/>
        <note>ligand shared between dimeric partners</note>
    </ligand>
</feature>
<accession>Q0CE30</accession>
<keyword id="KW-0004">4Fe-4S</keyword>
<keyword id="KW-0067">ATP-binding</keyword>
<keyword id="KW-0963">Cytoplasm</keyword>
<keyword id="KW-0408">Iron</keyword>
<keyword id="KW-0411">Iron-sulfur</keyword>
<keyword id="KW-0479">Metal-binding</keyword>
<keyword id="KW-0547">Nucleotide-binding</keyword>
<keyword id="KW-1185">Reference proteome</keyword>
<dbReference type="EMBL" id="CH476605">
    <property type="protein sequence ID" value="EAU31227.1"/>
    <property type="molecule type" value="Genomic_DNA"/>
</dbReference>
<dbReference type="RefSeq" id="XP_001216675.1">
    <property type="nucleotide sequence ID" value="XM_001216675.1"/>
</dbReference>
<dbReference type="SMR" id="Q0CE30"/>
<dbReference type="STRING" id="341663.Q0CE30"/>
<dbReference type="EnsemblFungi" id="EAU31227">
    <property type="protein sequence ID" value="EAU31227"/>
    <property type="gene ID" value="ATEG_08054"/>
</dbReference>
<dbReference type="GeneID" id="4353396"/>
<dbReference type="VEuPathDB" id="FungiDB:ATEG_08054"/>
<dbReference type="eggNOG" id="KOG3022">
    <property type="taxonomic scope" value="Eukaryota"/>
</dbReference>
<dbReference type="HOGENOM" id="CLU_024839_0_1_1"/>
<dbReference type="OMA" id="WIPVFAD"/>
<dbReference type="OrthoDB" id="3900342at2759"/>
<dbReference type="Proteomes" id="UP000007963">
    <property type="component" value="Unassembled WGS sequence"/>
</dbReference>
<dbReference type="GO" id="GO:1904564">
    <property type="term" value="C:cytosolic [4Fe-4S] assembly scaffold complex"/>
    <property type="evidence" value="ECO:0007669"/>
    <property type="project" value="EnsemblFungi"/>
</dbReference>
<dbReference type="GO" id="GO:0051539">
    <property type="term" value="F:4 iron, 4 sulfur cluster binding"/>
    <property type="evidence" value="ECO:0007669"/>
    <property type="project" value="UniProtKB-UniRule"/>
</dbReference>
<dbReference type="GO" id="GO:0005524">
    <property type="term" value="F:ATP binding"/>
    <property type="evidence" value="ECO:0007669"/>
    <property type="project" value="UniProtKB-KW"/>
</dbReference>
<dbReference type="GO" id="GO:0016887">
    <property type="term" value="F:ATP hydrolysis activity"/>
    <property type="evidence" value="ECO:0007669"/>
    <property type="project" value="EnsemblFungi"/>
</dbReference>
<dbReference type="GO" id="GO:0140663">
    <property type="term" value="F:ATP-dependent FeS chaperone activity"/>
    <property type="evidence" value="ECO:0007669"/>
    <property type="project" value="InterPro"/>
</dbReference>
<dbReference type="GO" id="GO:0046872">
    <property type="term" value="F:metal ion binding"/>
    <property type="evidence" value="ECO:0007669"/>
    <property type="project" value="UniProtKB-KW"/>
</dbReference>
<dbReference type="GO" id="GO:0016226">
    <property type="term" value="P:iron-sulfur cluster assembly"/>
    <property type="evidence" value="ECO:0007669"/>
    <property type="project" value="UniProtKB-UniRule"/>
</dbReference>
<dbReference type="GO" id="GO:0002098">
    <property type="term" value="P:tRNA wobble uridine modification"/>
    <property type="evidence" value="ECO:0007669"/>
    <property type="project" value="EnsemblFungi"/>
</dbReference>
<dbReference type="CDD" id="cd02037">
    <property type="entry name" value="Mrp_NBP35"/>
    <property type="match status" value="1"/>
</dbReference>
<dbReference type="FunFam" id="3.40.50.300:FF:001300">
    <property type="entry name" value="Cytosolic Fe-S cluster assembly factor CFD1"/>
    <property type="match status" value="1"/>
</dbReference>
<dbReference type="Gene3D" id="3.40.50.300">
    <property type="entry name" value="P-loop containing nucleotide triphosphate hydrolases"/>
    <property type="match status" value="1"/>
</dbReference>
<dbReference type="HAMAP" id="MF_02040">
    <property type="entry name" value="Mrp_NBP35"/>
    <property type="match status" value="1"/>
</dbReference>
<dbReference type="HAMAP" id="MF_03039">
    <property type="entry name" value="NUBP2"/>
    <property type="match status" value="1"/>
</dbReference>
<dbReference type="InterPro" id="IPR019591">
    <property type="entry name" value="Mrp/NBP35_ATP-bd"/>
</dbReference>
<dbReference type="InterPro" id="IPR028600">
    <property type="entry name" value="NUBP2/Cfd1_eukaryotes"/>
</dbReference>
<dbReference type="InterPro" id="IPR027417">
    <property type="entry name" value="P-loop_NTPase"/>
</dbReference>
<dbReference type="InterPro" id="IPR033756">
    <property type="entry name" value="YlxH/NBP35"/>
</dbReference>
<dbReference type="PANTHER" id="PTHR23264:SF19">
    <property type="entry name" value="CYTOSOLIC FE-S CLUSTER ASSEMBLY FACTOR NUBP2"/>
    <property type="match status" value="1"/>
</dbReference>
<dbReference type="PANTHER" id="PTHR23264">
    <property type="entry name" value="NUCLEOTIDE-BINDING PROTEIN NBP35 YEAST -RELATED"/>
    <property type="match status" value="1"/>
</dbReference>
<dbReference type="Pfam" id="PF10609">
    <property type="entry name" value="ParA"/>
    <property type="match status" value="1"/>
</dbReference>
<dbReference type="SUPFAM" id="SSF52540">
    <property type="entry name" value="P-loop containing nucleoside triphosphate hydrolases"/>
    <property type="match status" value="1"/>
</dbReference>